<proteinExistence type="inferred from homology"/>
<name>RL28_PARS2</name>
<keyword id="KW-0687">Ribonucleoprotein</keyword>
<keyword id="KW-0689">Ribosomal protein</keyword>
<gene>
    <name evidence="1" type="primary">rpmB</name>
    <name type="ordered locus">Franean1_1131</name>
</gene>
<dbReference type="EMBL" id="CP000820">
    <property type="protein sequence ID" value="ABW10585.1"/>
    <property type="molecule type" value="Genomic_DNA"/>
</dbReference>
<dbReference type="RefSeq" id="WP_020458764.1">
    <property type="nucleotide sequence ID" value="NC_009921.1"/>
</dbReference>
<dbReference type="SMR" id="A8L585"/>
<dbReference type="STRING" id="298653.Franean1_1131"/>
<dbReference type="KEGG" id="fre:Franean1_1131"/>
<dbReference type="eggNOG" id="COG0227">
    <property type="taxonomic scope" value="Bacteria"/>
</dbReference>
<dbReference type="HOGENOM" id="CLU_064548_7_0_11"/>
<dbReference type="GO" id="GO:1990904">
    <property type="term" value="C:ribonucleoprotein complex"/>
    <property type="evidence" value="ECO:0007669"/>
    <property type="project" value="UniProtKB-KW"/>
</dbReference>
<dbReference type="GO" id="GO:0005840">
    <property type="term" value="C:ribosome"/>
    <property type="evidence" value="ECO:0007669"/>
    <property type="project" value="UniProtKB-KW"/>
</dbReference>
<dbReference type="GO" id="GO:0003735">
    <property type="term" value="F:structural constituent of ribosome"/>
    <property type="evidence" value="ECO:0007669"/>
    <property type="project" value="InterPro"/>
</dbReference>
<dbReference type="GO" id="GO:0006412">
    <property type="term" value="P:translation"/>
    <property type="evidence" value="ECO:0007669"/>
    <property type="project" value="UniProtKB-UniRule"/>
</dbReference>
<dbReference type="Gene3D" id="2.30.170.40">
    <property type="entry name" value="Ribosomal protein L28/L24"/>
    <property type="match status" value="1"/>
</dbReference>
<dbReference type="HAMAP" id="MF_00373">
    <property type="entry name" value="Ribosomal_bL28"/>
    <property type="match status" value="1"/>
</dbReference>
<dbReference type="InterPro" id="IPR050096">
    <property type="entry name" value="Bacterial_rp_bL28"/>
</dbReference>
<dbReference type="InterPro" id="IPR026569">
    <property type="entry name" value="Ribosomal_bL28"/>
</dbReference>
<dbReference type="InterPro" id="IPR034704">
    <property type="entry name" value="Ribosomal_bL28/bL31-like_sf"/>
</dbReference>
<dbReference type="InterPro" id="IPR001383">
    <property type="entry name" value="Ribosomal_bL28_bact-type"/>
</dbReference>
<dbReference type="InterPro" id="IPR037147">
    <property type="entry name" value="Ribosomal_bL28_sf"/>
</dbReference>
<dbReference type="NCBIfam" id="TIGR00009">
    <property type="entry name" value="L28"/>
    <property type="match status" value="1"/>
</dbReference>
<dbReference type="PANTHER" id="PTHR39080">
    <property type="entry name" value="50S RIBOSOMAL PROTEIN L28"/>
    <property type="match status" value="1"/>
</dbReference>
<dbReference type="PANTHER" id="PTHR39080:SF1">
    <property type="entry name" value="LARGE RIBOSOMAL SUBUNIT PROTEIN BL28A"/>
    <property type="match status" value="1"/>
</dbReference>
<dbReference type="Pfam" id="PF00830">
    <property type="entry name" value="Ribosomal_L28"/>
    <property type="match status" value="1"/>
</dbReference>
<dbReference type="SUPFAM" id="SSF143800">
    <property type="entry name" value="L28p-like"/>
    <property type="match status" value="1"/>
</dbReference>
<sequence length="62" mass="6858">MSSVCDVCGKGPGFGMSVSHSHRRTRRRWNPNIQTVRAMVGRTPRRLNVCTSCLKAGKVTRG</sequence>
<protein>
    <recommendedName>
        <fullName evidence="1">Large ribosomal subunit protein bL28</fullName>
    </recommendedName>
    <alternativeName>
        <fullName evidence="2">50S ribosomal protein L28</fullName>
    </alternativeName>
</protein>
<feature type="chain" id="PRO_1000121637" description="Large ribosomal subunit protein bL28">
    <location>
        <begin position="1"/>
        <end position="62"/>
    </location>
</feature>
<comment type="similarity">
    <text evidence="1">Belongs to the bacterial ribosomal protein bL28 family.</text>
</comment>
<organism>
    <name type="scientific">Parafrankia sp. (strain EAN1pec)</name>
    <dbReference type="NCBI Taxonomy" id="298653"/>
    <lineage>
        <taxon>Bacteria</taxon>
        <taxon>Bacillati</taxon>
        <taxon>Actinomycetota</taxon>
        <taxon>Actinomycetes</taxon>
        <taxon>Frankiales</taxon>
        <taxon>Frankiaceae</taxon>
        <taxon>Parafrankia</taxon>
    </lineage>
</organism>
<evidence type="ECO:0000255" key="1">
    <source>
        <dbReference type="HAMAP-Rule" id="MF_00373"/>
    </source>
</evidence>
<evidence type="ECO:0000305" key="2"/>
<accession>A8L585</accession>
<reference key="1">
    <citation type="journal article" date="2007" name="Genome Res.">
        <title>Genome characteristics of facultatively symbiotic Frankia sp. strains reflect host range and host plant biogeography.</title>
        <authorList>
            <person name="Normand P."/>
            <person name="Lapierre P."/>
            <person name="Tisa L.S."/>
            <person name="Gogarten J.P."/>
            <person name="Alloisio N."/>
            <person name="Bagnarol E."/>
            <person name="Bassi C.A."/>
            <person name="Berry A.M."/>
            <person name="Bickhart D.M."/>
            <person name="Choisne N."/>
            <person name="Couloux A."/>
            <person name="Cournoyer B."/>
            <person name="Cruveiller S."/>
            <person name="Daubin V."/>
            <person name="Demange N."/>
            <person name="Francino M.P."/>
            <person name="Goltsman E."/>
            <person name="Huang Y."/>
            <person name="Kopp O.R."/>
            <person name="Labarre L."/>
            <person name="Lapidus A."/>
            <person name="Lavire C."/>
            <person name="Marechal J."/>
            <person name="Martinez M."/>
            <person name="Mastronunzio J.E."/>
            <person name="Mullin B.C."/>
            <person name="Niemann J."/>
            <person name="Pujic P."/>
            <person name="Rawnsley T."/>
            <person name="Rouy Z."/>
            <person name="Schenowitz C."/>
            <person name="Sellstedt A."/>
            <person name="Tavares F."/>
            <person name="Tomkins J.P."/>
            <person name="Vallenet D."/>
            <person name="Valverde C."/>
            <person name="Wall L.G."/>
            <person name="Wang Y."/>
            <person name="Medigue C."/>
            <person name="Benson D.R."/>
        </authorList>
    </citation>
    <scope>NUCLEOTIDE SEQUENCE [LARGE SCALE GENOMIC DNA]</scope>
    <source>
        <strain>EAN1pec</strain>
    </source>
</reference>